<gene>
    <name evidence="1" type="primary">rpsR</name>
    <name type="ordered locus">RBE_0121</name>
</gene>
<sequence>MSKNNTSETITRKPMERASKKVFFRRRKGCPLSVPNAPVIDYKNPELLIKFVSEGGRMLPSRITNVCAKKQRKLNNAIKIARILALLPFVFQAK</sequence>
<organism>
    <name type="scientific">Rickettsia bellii (strain RML369-C)</name>
    <dbReference type="NCBI Taxonomy" id="336407"/>
    <lineage>
        <taxon>Bacteria</taxon>
        <taxon>Pseudomonadati</taxon>
        <taxon>Pseudomonadota</taxon>
        <taxon>Alphaproteobacteria</taxon>
        <taxon>Rickettsiales</taxon>
        <taxon>Rickettsiaceae</taxon>
        <taxon>Rickettsieae</taxon>
        <taxon>Rickettsia</taxon>
        <taxon>belli group</taxon>
    </lineage>
</organism>
<reference key="1">
    <citation type="journal article" date="2006" name="PLoS Genet.">
        <title>Genome sequence of Rickettsia bellii illuminates the role of amoebae in gene exchanges between intracellular pathogens.</title>
        <authorList>
            <person name="Ogata H."/>
            <person name="La Scola B."/>
            <person name="Audic S."/>
            <person name="Renesto P."/>
            <person name="Blanc G."/>
            <person name="Robert C."/>
            <person name="Fournier P.-E."/>
            <person name="Claverie J.-M."/>
            <person name="Raoult D."/>
        </authorList>
    </citation>
    <scope>NUCLEOTIDE SEQUENCE [LARGE SCALE GENOMIC DNA]</scope>
    <source>
        <strain>RML369-C</strain>
    </source>
</reference>
<accession>Q1RKB2</accession>
<evidence type="ECO:0000255" key="1">
    <source>
        <dbReference type="HAMAP-Rule" id="MF_00270"/>
    </source>
</evidence>
<evidence type="ECO:0000305" key="2"/>
<keyword id="KW-0687">Ribonucleoprotein</keyword>
<keyword id="KW-0689">Ribosomal protein</keyword>
<keyword id="KW-0694">RNA-binding</keyword>
<keyword id="KW-0699">rRNA-binding</keyword>
<dbReference type="EMBL" id="CP000087">
    <property type="protein sequence ID" value="ABE04202.1"/>
    <property type="molecule type" value="Genomic_DNA"/>
</dbReference>
<dbReference type="RefSeq" id="WP_011476817.1">
    <property type="nucleotide sequence ID" value="NC_007940.1"/>
</dbReference>
<dbReference type="SMR" id="Q1RKB2"/>
<dbReference type="KEGG" id="rbe:RBE_0121"/>
<dbReference type="eggNOG" id="COG0238">
    <property type="taxonomic scope" value="Bacteria"/>
</dbReference>
<dbReference type="HOGENOM" id="CLU_148710_2_1_5"/>
<dbReference type="OrthoDB" id="9812008at2"/>
<dbReference type="Proteomes" id="UP000001951">
    <property type="component" value="Chromosome"/>
</dbReference>
<dbReference type="GO" id="GO:0022627">
    <property type="term" value="C:cytosolic small ribosomal subunit"/>
    <property type="evidence" value="ECO:0007669"/>
    <property type="project" value="TreeGrafter"/>
</dbReference>
<dbReference type="GO" id="GO:0070181">
    <property type="term" value="F:small ribosomal subunit rRNA binding"/>
    <property type="evidence" value="ECO:0007669"/>
    <property type="project" value="TreeGrafter"/>
</dbReference>
<dbReference type="GO" id="GO:0003735">
    <property type="term" value="F:structural constituent of ribosome"/>
    <property type="evidence" value="ECO:0007669"/>
    <property type="project" value="InterPro"/>
</dbReference>
<dbReference type="GO" id="GO:0006412">
    <property type="term" value="P:translation"/>
    <property type="evidence" value="ECO:0007669"/>
    <property type="project" value="UniProtKB-UniRule"/>
</dbReference>
<dbReference type="Gene3D" id="4.10.640.10">
    <property type="entry name" value="Ribosomal protein S18"/>
    <property type="match status" value="1"/>
</dbReference>
<dbReference type="HAMAP" id="MF_00270">
    <property type="entry name" value="Ribosomal_bS18"/>
    <property type="match status" value="1"/>
</dbReference>
<dbReference type="InterPro" id="IPR001648">
    <property type="entry name" value="Ribosomal_bS18"/>
</dbReference>
<dbReference type="InterPro" id="IPR018275">
    <property type="entry name" value="Ribosomal_bS18_CS"/>
</dbReference>
<dbReference type="InterPro" id="IPR036870">
    <property type="entry name" value="Ribosomal_bS18_sf"/>
</dbReference>
<dbReference type="NCBIfam" id="TIGR00165">
    <property type="entry name" value="S18"/>
    <property type="match status" value="1"/>
</dbReference>
<dbReference type="PANTHER" id="PTHR13479">
    <property type="entry name" value="30S RIBOSOMAL PROTEIN S18"/>
    <property type="match status" value="1"/>
</dbReference>
<dbReference type="PANTHER" id="PTHR13479:SF40">
    <property type="entry name" value="SMALL RIBOSOMAL SUBUNIT PROTEIN BS18M"/>
    <property type="match status" value="1"/>
</dbReference>
<dbReference type="Pfam" id="PF01084">
    <property type="entry name" value="Ribosomal_S18"/>
    <property type="match status" value="1"/>
</dbReference>
<dbReference type="PRINTS" id="PR00974">
    <property type="entry name" value="RIBOSOMALS18"/>
</dbReference>
<dbReference type="SUPFAM" id="SSF46911">
    <property type="entry name" value="Ribosomal protein S18"/>
    <property type="match status" value="1"/>
</dbReference>
<dbReference type="PROSITE" id="PS00057">
    <property type="entry name" value="RIBOSOMAL_S18"/>
    <property type="match status" value="1"/>
</dbReference>
<protein>
    <recommendedName>
        <fullName evidence="1">Small ribosomal subunit protein bS18</fullName>
    </recommendedName>
    <alternativeName>
        <fullName evidence="2">30S ribosomal protein S18</fullName>
    </alternativeName>
</protein>
<name>RS18_RICBR</name>
<comment type="function">
    <text evidence="1">Binds as a heterodimer with protein bS6 to the central domain of the 16S rRNA, where it helps stabilize the platform of the 30S subunit.</text>
</comment>
<comment type="subunit">
    <text evidence="1">Part of the 30S ribosomal subunit. Forms a tight heterodimer with protein bS6.</text>
</comment>
<comment type="similarity">
    <text evidence="1">Belongs to the bacterial ribosomal protein bS18 family.</text>
</comment>
<feature type="chain" id="PRO_0000278022" description="Small ribosomal subunit protein bS18">
    <location>
        <begin position="1"/>
        <end position="94"/>
    </location>
</feature>
<proteinExistence type="inferred from homology"/>